<evidence type="ECO:0000255" key="1">
    <source>
        <dbReference type="HAMAP-Rule" id="MF_01636"/>
    </source>
</evidence>
<protein>
    <recommendedName>
        <fullName evidence="1">3-octaprenyl-4-hydroxybenzoate carboxy-lyase</fullName>
        <ecNumber evidence="1">4.1.1.98</ecNumber>
    </recommendedName>
    <alternativeName>
        <fullName evidence="1">Polyprenyl p-hydroxybenzoate decarboxylase</fullName>
    </alternativeName>
</protein>
<organism>
    <name type="scientific">Salmonella typhimurium (strain LT2 / SGSC1412 / ATCC 700720)</name>
    <dbReference type="NCBI Taxonomy" id="99287"/>
    <lineage>
        <taxon>Bacteria</taxon>
        <taxon>Pseudomonadati</taxon>
        <taxon>Pseudomonadota</taxon>
        <taxon>Gammaproteobacteria</taxon>
        <taxon>Enterobacterales</taxon>
        <taxon>Enterobacteriaceae</taxon>
        <taxon>Salmonella</taxon>
    </lineage>
</organism>
<name>UBID_SALTY</name>
<accession>Q9L6M0</accession>
<proteinExistence type="inferred from homology"/>
<gene>
    <name evidence="1" type="primary">ubiD</name>
    <name type="ordered locus">STM3978</name>
    <name type="ORF">STMD1.11</name>
</gene>
<keyword id="KW-1003">Cell membrane</keyword>
<keyword id="KW-0210">Decarboxylase</keyword>
<keyword id="KW-0285">Flavoprotein</keyword>
<keyword id="KW-0288">FMN</keyword>
<keyword id="KW-0456">Lyase</keyword>
<keyword id="KW-0464">Manganese</keyword>
<keyword id="KW-0472">Membrane</keyword>
<keyword id="KW-0479">Metal-binding</keyword>
<keyword id="KW-1185">Reference proteome</keyword>
<keyword id="KW-0831">Ubiquinone biosynthesis</keyword>
<reference key="1">
    <citation type="journal article" date="2001" name="Nature">
        <title>Complete genome sequence of Salmonella enterica serovar Typhimurium LT2.</title>
        <authorList>
            <person name="McClelland M."/>
            <person name="Sanderson K.E."/>
            <person name="Spieth J."/>
            <person name="Clifton S.W."/>
            <person name="Latreille P."/>
            <person name="Courtney L."/>
            <person name="Porwollik S."/>
            <person name="Ali J."/>
            <person name="Dante M."/>
            <person name="Du F."/>
            <person name="Hou S."/>
            <person name="Layman D."/>
            <person name="Leonard S."/>
            <person name="Nguyen C."/>
            <person name="Scott K."/>
            <person name="Holmes A."/>
            <person name="Grewal N."/>
            <person name="Mulvaney E."/>
            <person name="Ryan E."/>
            <person name="Sun H."/>
            <person name="Florea L."/>
            <person name="Miller W."/>
            <person name="Stoneking T."/>
            <person name="Nhan M."/>
            <person name="Waterston R."/>
            <person name="Wilson R.K."/>
        </authorList>
    </citation>
    <scope>NUCLEOTIDE SEQUENCE [LARGE SCALE GENOMIC DNA]</scope>
    <source>
        <strain>LT2 / SGSC1412 / ATCC 700720</strain>
    </source>
</reference>
<dbReference type="EC" id="4.1.1.98" evidence="1"/>
<dbReference type="EMBL" id="AF233324">
    <property type="protein sequence ID" value="AAF33412.1"/>
    <property type="molecule type" value="Genomic_DNA"/>
</dbReference>
<dbReference type="EMBL" id="AE006468">
    <property type="protein sequence ID" value="AAL22822.1"/>
    <property type="molecule type" value="Genomic_DNA"/>
</dbReference>
<dbReference type="RefSeq" id="WP_000339764.1">
    <property type="nucleotide sequence ID" value="NC_003197.2"/>
</dbReference>
<dbReference type="SMR" id="Q9L6M0"/>
<dbReference type="STRING" id="99287.STM3978"/>
<dbReference type="PaxDb" id="99287-STM3978"/>
<dbReference type="KEGG" id="stm:STM3978"/>
<dbReference type="PATRIC" id="fig|99287.12.peg.4197"/>
<dbReference type="HOGENOM" id="CLU_023348_4_1_6"/>
<dbReference type="OMA" id="DWKDVIW"/>
<dbReference type="PhylomeDB" id="Q9L6M0"/>
<dbReference type="BioCyc" id="SENT99287:STM3978-MONOMER"/>
<dbReference type="UniPathway" id="UPA00232"/>
<dbReference type="Proteomes" id="UP000001014">
    <property type="component" value="Chromosome"/>
</dbReference>
<dbReference type="GO" id="GO:0005737">
    <property type="term" value="C:cytoplasm"/>
    <property type="evidence" value="ECO:0000318"/>
    <property type="project" value="GO_Central"/>
</dbReference>
<dbReference type="GO" id="GO:0005829">
    <property type="term" value="C:cytosol"/>
    <property type="evidence" value="ECO:0000318"/>
    <property type="project" value="GO_Central"/>
</dbReference>
<dbReference type="GO" id="GO:0005886">
    <property type="term" value="C:plasma membrane"/>
    <property type="evidence" value="ECO:0007669"/>
    <property type="project" value="UniProtKB-SubCell"/>
</dbReference>
<dbReference type="GO" id="GO:0008694">
    <property type="term" value="F:3-octaprenyl-4-hydroxybenzoate carboxy-lyase activity"/>
    <property type="evidence" value="ECO:0000318"/>
    <property type="project" value="GO_Central"/>
</dbReference>
<dbReference type="GO" id="GO:0046872">
    <property type="term" value="F:metal ion binding"/>
    <property type="evidence" value="ECO:0007669"/>
    <property type="project" value="UniProtKB-KW"/>
</dbReference>
<dbReference type="GO" id="GO:0006744">
    <property type="term" value="P:ubiquinone biosynthetic process"/>
    <property type="evidence" value="ECO:0000318"/>
    <property type="project" value="GO_Central"/>
</dbReference>
<dbReference type="FunFam" id="1.20.5.570:FF:000001">
    <property type="entry name" value="3-octaprenyl-4-hydroxybenzoate carboxy-lyase"/>
    <property type="match status" value="1"/>
</dbReference>
<dbReference type="FunFam" id="3.40.1670.10:FF:000001">
    <property type="entry name" value="3-octaprenyl-4-hydroxybenzoate carboxy-lyase"/>
    <property type="match status" value="1"/>
</dbReference>
<dbReference type="Gene3D" id="1.20.5.570">
    <property type="entry name" value="Single helix bin"/>
    <property type="match status" value="1"/>
</dbReference>
<dbReference type="Gene3D" id="3.40.1670.10">
    <property type="entry name" value="UbiD C-terminal domain-like"/>
    <property type="match status" value="1"/>
</dbReference>
<dbReference type="HAMAP" id="MF_01636">
    <property type="entry name" value="UbiD"/>
    <property type="match status" value="1"/>
</dbReference>
<dbReference type="InterPro" id="IPR002830">
    <property type="entry name" value="UbiD"/>
</dbReference>
<dbReference type="InterPro" id="IPR049381">
    <property type="entry name" value="UbiD-like_C"/>
</dbReference>
<dbReference type="InterPro" id="IPR049383">
    <property type="entry name" value="UbiD-like_N"/>
</dbReference>
<dbReference type="InterPro" id="IPR023677">
    <property type="entry name" value="UbiD_bacteria"/>
</dbReference>
<dbReference type="InterPro" id="IPR048304">
    <property type="entry name" value="UbiD_Rift_dom"/>
</dbReference>
<dbReference type="NCBIfam" id="NF008175">
    <property type="entry name" value="PRK10922.1"/>
    <property type="match status" value="1"/>
</dbReference>
<dbReference type="NCBIfam" id="TIGR00148">
    <property type="entry name" value="UbiD family decarboxylase"/>
    <property type="match status" value="1"/>
</dbReference>
<dbReference type="PANTHER" id="PTHR30108">
    <property type="entry name" value="3-OCTAPRENYL-4-HYDROXYBENZOATE CARBOXY-LYASE-RELATED"/>
    <property type="match status" value="1"/>
</dbReference>
<dbReference type="PANTHER" id="PTHR30108:SF17">
    <property type="entry name" value="FERULIC ACID DECARBOXYLASE 1"/>
    <property type="match status" value="1"/>
</dbReference>
<dbReference type="Pfam" id="PF01977">
    <property type="entry name" value="UbiD"/>
    <property type="match status" value="1"/>
</dbReference>
<dbReference type="Pfam" id="PF20696">
    <property type="entry name" value="UbiD_C"/>
    <property type="match status" value="1"/>
</dbReference>
<dbReference type="Pfam" id="PF20695">
    <property type="entry name" value="UbiD_N"/>
    <property type="match status" value="1"/>
</dbReference>
<dbReference type="SUPFAM" id="SSF50475">
    <property type="entry name" value="FMN-binding split barrel"/>
    <property type="match status" value="1"/>
</dbReference>
<dbReference type="SUPFAM" id="SSF143968">
    <property type="entry name" value="UbiD C-terminal domain-like"/>
    <property type="match status" value="1"/>
</dbReference>
<comment type="function">
    <text evidence="1">Catalyzes the decarboxylation of 3-octaprenyl-4-hydroxy benzoate to 2-octaprenylphenol, an intermediate step in ubiquinone biosynthesis.</text>
</comment>
<comment type="catalytic activity">
    <reaction evidence="1">
        <text>a 4-hydroxy-3-(all-trans-polyprenyl)benzoate + H(+) = a 2-(all-trans-polyprenyl)phenol + CO2</text>
        <dbReference type="Rhea" id="RHEA:41680"/>
        <dbReference type="Rhea" id="RHEA-COMP:9514"/>
        <dbReference type="Rhea" id="RHEA-COMP:9516"/>
        <dbReference type="ChEBI" id="CHEBI:1269"/>
        <dbReference type="ChEBI" id="CHEBI:15378"/>
        <dbReference type="ChEBI" id="CHEBI:16526"/>
        <dbReference type="ChEBI" id="CHEBI:78396"/>
        <dbReference type="EC" id="4.1.1.98"/>
    </reaction>
</comment>
<comment type="cofactor">
    <cofactor evidence="1">
        <name>prenylated FMN</name>
        <dbReference type="ChEBI" id="CHEBI:87746"/>
    </cofactor>
    <text evidence="1">Binds 1 prenylated FMN per subunit.</text>
</comment>
<comment type="cofactor">
    <cofactor evidence="1">
        <name>Mn(2+)</name>
        <dbReference type="ChEBI" id="CHEBI:29035"/>
    </cofactor>
</comment>
<comment type="pathway">
    <text evidence="1">Cofactor biosynthesis; ubiquinone biosynthesis.</text>
</comment>
<comment type="subunit">
    <text evidence="1">Homohexamer.</text>
</comment>
<comment type="subcellular location">
    <subcellularLocation>
        <location evidence="1">Cell membrane</location>
        <topology evidence="1">Peripheral membrane protein</topology>
    </subcellularLocation>
</comment>
<comment type="similarity">
    <text evidence="1">Belongs to the UbiD family.</text>
</comment>
<sequence length="492" mass="55134">MDAMKYHDLRDFLTLLEQQGELKRITLPVDPHLEITEIADRTLRAGGPALLFENPKGYAMPVLCNLFGTPKRVAMGMGQDDVSALREVGKLLAFLKEPEPPKGFRDLFDKLPQFKQVLNMPTKRLRGAPCQQKIASGDDVDLTRLPVMTCWPDDAAPLITWGLTVTRGPHKERQNLGIYRQQLIGKNKLIMRWLSHRGGALDFQEWLAARPGERFPVSVALGADPATILGAVTPVPDTLSEYAFAGLLRGTKTEVVKCLSNDLEVPASAEIILEGYIEPGEMAPEGPYGDHTGYYNEVDSFPVFTVTHITQREDAIYHSTYTGRPPDEPAVLGVALNEVFVPILQKQFPEIVDFYLPPEGCSYRLAVVTMKKQYAGHAKRVMMGVWSFLRQFMYTKFVIVCDDDVNARDWNDVIWAITTRMDPARDTVLVENTPIDYLDFASPVSGLGSKMGLDATNKWPGETQREWGRPIVKDPEVTARIDAIWDELAIFK</sequence>
<feature type="chain" id="PRO_0000157365" description="3-octaprenyl-4-hydroxybenzoate carboxy-lyase">
    <location>
        <begin position="1"/>
        <end position="492"/>
    </location>
</feature>
<feature type="active site" description="Proton donor" evidence="1">
    <location>
        <position position="290"/>
    </location>
</feature>
<feature type="binding site" evidence="1">
    <location>
        <position position="175"/>
    </location>
    <ligand>
        <name>Mn(2+)</name>
        <dbReference type="ChEBI" id="CHEBI:29035"/>
    </ligand>
</feature>
<feature type="binding site" evidence="1">
    <location>
        <begin position="178"/>
        <end position="180"/>
    </location>
    <ligand>
        <name>prenylated FMN</name>
        <dbReference type="ChEBI" id="CHEBI:87746"/>
    </ligand>
</feature>
<feature type="binding site" evidence="1">
    <location>
        <begin position="192"/>
        <end position="194"/>
    </location>
    <ligand>
        <name>prenylated FMN</name>
        <dbReference type="ChEBI" id="CHEBI:87746"/>
    </ligand>
</feature>
<feature type="binding site" evidence="1">
    <location>
        <begin position="197"/>
        <end position="198"/>
    </location>
    <ligand>
        <name>prenylated FMN</name>
        <dbReference type="ChEBI" id="CHEBI:87746"/>
    </ligand>
</feature>
<feature type="binding site" evidence="1">
    <location>
        <position position="241"/>
    </location>
    <ligand>
        <name>Mn(2+)</name>
        <dbReference type="ChEBI" id="CHEBI:29035"/>
    </ligand>
</feature>